<evidence type="ECO:0000250" key="1"/>
<evidence type="ECO:0000255" key="2">
    <source>
        <dbReference type="HAMAP-Rule" id="MF_01898"/>
    </source>
</evidence>
<comment type="function">
    <text evidence="2">A type II topoisomerase that negatively supercoils closed circular double-stranded (ds) DNA in an ATP-dependent manner to modulate DNA topology and maintain chromosomes in an underwound state. Negative supercoiling favors strand separation, and DNA replication, transcription, recombination and repair, all of which involve strand separation. Also able to catalyze the interconversion of other topological isomers of dsDNA rings, including catenanes and knotted rings. Type II topoisomerases break and join 2 DNA strands simultaneously in an ATP-dependent manner.</text>
</comment>
<comment type="catalytic activity">
    <reaction evidence="2">
        <text>ATP-dependent breakage, passage and rejoining of double-stranded DNA.</text>
        <dbReference type="EC" id="5.6.2.2"/>
    </reaction>
</comment>
<comment type="cofactor">
    <cofactor evidence="2">
        <name>Mg(2+)</name>
        <dbReference type="ChEBI" id="CHEBI:18420"/>
    </cofactor>
    <cofactor evidence="2">
        <name>Mn(2+)</name>
        <dbReference type="ChEBI" id="CHEBI:29035"/>
    </cofactor>
    <cofactor evidence="2">
        <name>Ca(2+)</name>
        <dbReference type="ChEBI" id="CHEBI:29108"/>
    </cofactor>
    <text evidence="2">Binds two Mg(2+) per subunit. The magnesium ions form salt bridges with both the protein and the DNA. Can also accept other divalent metal cations, such as Mn(2+) or Ca(2+).</text>
</comment>
<comment type="activity regulation">
    <text evidence="1">Target of two classes of inhibitors, coumarins and quinolones. Coumarins bind to GyrB and are competitive inhibitors with respect to ATP. Quinolones bind DNA gyrase when the enzyme is complexed with DNA and trap the enzyme in an abortive ternary complex (By similarity).</text>
</comment>
<comment type="subunit">
    <text evidence="2">Heterotetramer, composed of two GyrA and two GyrB chains. In the heterotetramer, GyrA contains the active site tyrosine that forms a transient covalent intermediate with DNA, while GyrB binds cofactors and catalyzes ATP hydrolysis.</text>
</comment>
<comment type="subcellular location">
    <subcellularLocation>
        <location evidence="2">Cytoplasm</location>
    </subcellularLocation>
</comment>
<comment type="miscellaneous">
    <text evidence="2">Few gyrases are as efficient as E.coli at forming negative supercoils. Not all organisms have 2 type II topoisomerases; in organisms with a single type II topoisomerase this enzyme also has to decatenate newly replicated chromosomes.</text>
</comment>
<comment type="similarity">
    <text evidence="2">Belongs to the type II topoisomerase GyrB family.</text>
</comment>
<sequence>MSNSYDSSSIKVLKGLDAVRKRPGMYIGDTDDGTGLHHMVFEVVDNAIDEALAGHCKEIIVTIHADNSVSVQDDGRGIPTGIHPEEGVSAAEVIMTVLHAGGKFDDNSYKVSGGLHGVGVSVVNALSQKLELVIQREGKIHRQIYEHGVPQAPLAVTGETEKTGTMVRFWPSLETFTNVTEFEYEILAKRLRELSFLNSGVSIRLRDKRDGKEDHFHYEGGIKAFVEYLNKNKTPIHPNIFYFSTEKDGIGVEVALQWNDGFQENIYCFTNNIPQRDGGTHLAGFRAAMTRTLNAYMDKEGYSKKAKVSATGDDAREGLIAVVSVKVPDPKFSSQTKDKLVSSEVKSAVEQQMNELLAEYLLENPTDAKIVVGKIIDAARAREAARRAREMTRRKGALDLAGLPGKLADCQERDPALSELYLVEGDSAGGSAKQGRNRKNQAILPLKGKILNVEKARFDKMLSSQEVATLITALGCGIGRDEYNPDKLRYHSIIIMTDADVDGSHIRTLLLTFFYRQMPEIVERGHVYIAQPPLYKVKKGKQEQYIKDDEAMDQYQISIALDGATLHTNASAPALAGEALEKLVSEYNATQKMINRMERRYPKAMLKELIYQPTLTEADLSDEQTVTRWVNALVSELNDKEQHGSQWKFDVHTNAEQNLFEPIVRVRTHGVDTDYPLDHEFITGGEYRRICTLGEKLRGLLEEDAFIERGERRQPVASFEQALDWLVKESRRGLSIQRYKGLGEMNPEQLWETTMDPESRRMLRVTVKDAIAADQLFTTLMGDAVEPRRAFIEENALKAANIDI</sequence>
<accession>P0AES8</accession>
<accession>O08438</accession>
<accession>P06982</accession>
<name>GYRB_SHIFL</name>
<reference key="1">
    <citation type="journal article" date="2002" name="Nucleic Acids Res.">
        <title>Genome sequence of Shigella flexneri 2a: insights into pathogenicity through comparison with genomes of Escherichia coli K12 and O157.</title>
        <authorList>
            <person name="Jin Q."/>
            <person name="Yuan Z."/>
            <person name="Xu J."/>
            <person name="Wang Y."/>
            <person name="Shen Y."/>
            <person name="Lu W."/>
            <person name="Wang J."/>
            <person name="Liu H."/>
            <person name="Yang J."/>
            <person name="Yang F."/>
            <person name="Zhang X."/>
            <person name="Zhang J."/>
            <person name="Yang G."/>
            <person name="Wu H."/>
            <person name="Qu D."/>
            <person name="Dong J."/>
            <person name="Sun L."/>
            <person name="Xue Y."/>
            <person name="Zhao A."/>
            <person name="Gao Y."/>
            <person name="Zhu J."/>
            <person name="Kan B."/>
            <person name="Ding K."/>
            <person name="Chen S."/>
            <person name="Cheng H."/>
            <person name="Yao Z."/>
            <person name="He B."/>
            <person name="Chen R."/>
            <person name="Ma D."/>
            <person name="Qiang B."/>
            <person name="Wen Y."/>
            <person name="Hou Y."/>
            <person name="Yu J."/>
        </authorList>
    </citation>
    <scope>NUCLEOTIDE SEQUENCE [LARGE SCALE GENOMIC DNA]</scope>
    <source>
        <strain>301 / Serotype 2a</strain>
    </source>
</reference>
<reference key="2">
    <citation type="journal article" date="2003" name="Infect. Immun.">
        <title>Complete genome sequence and comparative genomics of Shigella flexneri serotype 2a strain 2457T.</title>
        <authorList>
            <person name="Wei J."/>
            <person name="Goldberg M.B."/>
            <person name="Burland V."/>
            <person name="Venkatesan M.M."/>
            <person name="Deng W."/>
            <person name="Fournier G."/>
            <person name="Mayhew G.F."/>
            <person name="Plunkett G. III"/>
            <person name="Rose D.J."/>
            <person name="Darling A."/>
            <person name="Mau B."/>
            <person name="Perna N.T."/>
            <person name="Payne S.M."/>
            <person name="Runyen-Janecky L.J."/>
            <person name="Zhou S."/>
            <person name="Schwartz D.C."/>
            <person name="Blattner F.R."/>
        </authorList>
    </citation>
    <scope>NUCLEOTIDE SEQUENCE [LARGE SCALE GENOMIC DNA]</scope>
    <source>
        <strain>ATCC 700930 / 2457T / Serotype 2a</strain>
    </source>
</reference>
<gene>
    <name evidence="2" type="primary">gyrB</name>
    <name type="ordered locus">SF3765</name>
    <name type="ordered locus">S4006</name>
</gene>
<protein>
    <recommendedName>
        <fullName evidence="2">DNA gyrase subunit B</fullName>
        <ecNumber evidence="2">5.6.2.2</ecNumber>
    </recommendedName>
</protein>
<organism>
    <name type="scientific">Shigella flexneri</name>
    <dbReference type="NCBI Taxonomy" id="623"/>
    <lineage>
        <taxon>Bacteria</taxon>
        <taxon>Pseudomonadati</taxon>
        <taxon>Pseudomonadota</taxon>
        <taxon>Gammaproteobacteria</taxon>
        <taxon>Enterobacterales</taxon>
        <taxon>Enterobacteriaceae</taxon>
        <taxon>Shigella</taxon>
    </lineage>
</organism>
<proteinExistence type="inferred from homology"/>
<feature type="initiator methionine" description="Removed" evidence="1">
    <location>
        <position position="1"/>
    </location>
</feature>
<feature type="chain" id="PRO_0000145335" description="DNA gyrase subunit B">
    <location>
        <begin position="2"/>
        <end position="804"/>
    </location>
</feature>
<feature type="domain" description="Toprim" evidence="2">
    <location>
        <begin position="418"/>
        <end position="533"/>
    </location>
</feature>
<feature type="binding site" evidence="2">
    <location>
        <position position="424"/>
    </location>
    <ligand>
        <name>Mg(2+)</name>
        <dbReference type="ChEBI" id="CHEBI:18420"/>
        <label>1</label>
        <note>catalytic</note>
    </ligand>
</feature>
<feature type="binding site" evidence="2">
    <location>
        <position position="498"/>
    </location>
    <ligand>
        <name>Mg(2+)</name>
        <dbReference type="ChEBI" id="CHEBI:18420"/>
        <label>1</label>
        <note>catalytic</note>
    </ligand>
</feature>
<feature type="binding site" evidence="2">
    <location>
        <position position="498"/>
    </location>
    <ligand>
        <name>Mg(2+)</name>
        <dbReference type="ChEBI" id="CHEBI:18420"/>
        <label>2</label>
    </ligand>
</feature>
<feature type="binding site" evidence="2">
    <location>
        <position position="500"/>
    </location>
    <ligand>
        <name>Mg(2+)</name>
        <dbReference type="ChEBI" id="CHEBI:18420"/>
        <label>2</label>
    </ligand>
</feature>
<feature type="site" description="Interaction with DNA" evidence="2">
    <location>
        <position position="449"/>
    </location>
</feature>
<feature type="site" description="Interaction with DNA" evidence="2">
    <location>
        <position position="452"/>
    </location>
</feature>
<keyword id="KW-0046">Antibiotic resistance</keyword>
<keyword id="KW-0067">ATP-binding</keyword>
<keyword id="KW-0963">Cytoplasm</keyword>
<keyword id="KW-0238">DNA-binding</keyword>
<keyword id="KW-0413">Isomerase</keyword>
<keyword id="KW-0460">Magnesium</keyword>
<keyword id="KW-0479">Metal-binding</keyword>
<keyword id="KW-0547">Nucleotide-binding</keyword>
<keyword id="KW-1185">Reference proteome</keyword>
<keyword id="KW-0799">Topoisomerase</keyword>
<dbReference type="EC" id="5.6.2.2" evidence="2"/>
<dbReference type="EMBL" id="AE005674">
    <property type="protein sequence ID" value="AAN45208.2"/>
    <property type="molecule type" value="Genomic_DNA"/>
</dbReference>
<dbReference type="EMBL" id="AE014073">
    <property type="protein sequence ID" value="AAP18989.1"/>
    <property type="molecule type" value="Genomic_DNA"/>
</dbReference>
<dbReference type="RefSeq" id="NP_709501.2">
    <property type="nucleotide sequence ID" value="NC_004337.2"/>
</dbReference>
<dbReference type="RefSeq" id="WP_000072067.1">
    <property type="nucleotide sequence ID" value="NZ_WPGW01000019.1"/>
</dbReference>
<dbReference type="BMRB" id="P0AES8"/>
<dbReference type="SMR" id="P0AES8"/>
<dbReference type="STRING" id="198214.SF3765"/>
<dbReference type="PaxDb" id="198214-SF3765"/>
<dbReference type="GeneID" id="1026143"/>
<dbReference type="GeneID" id="93778440"/>
<dbReference type="KEGG" id="sfl:SF3765"/>
<dbReference type="KEGG" id="sfx:S4006"/>
<dbReference type="PATRIC" id="fig|198214.7.peg.4442"/>
<dbReference type="HOGENOM" id="CLU_006146_4_1_6"/>
<dbReference type="Proteomes" id="UP000001006">
    <property type="component" value="Chromosome"/>
</dbReference>
<dbReference type="Proteomes" id="UP000002673">
    <property type="component" value="Chromosome"/>
</dbReference>
<dbReference type="GO" id="GO:0005694">
    <property type="term" value="C:chromosome"/>
    <property type="evidence" value="ECO:0007669"/>
    <property type="project" value="InterPro"/>
</dbReference>
<dbReference type="GO" id="GO:0005737">
    <property type="term" value="C:cytoplasm"/>
    <property type="evidence" value="ECO:0007669"/>
    <property type="project" value="UniProtKB-SubCell"/>
</dbReference>
<dbReference type="GO" id="GO:0005524">
    <property type="term" value="F:ATP binding"/>
    <property type="evidence" value="ECO:0007669"/>
    <property type="project" value="UniProtKB-UniRule"/>
</dbReference>
<dbReference type="GO" id="GO:0003677">
    <property type="term" value="F:DNA binding"/>
    <property type="evidence" value="ECO:0007669"/>
    <property type="project" value="UniProtKB-KW"/>
</dbReference>
<dbReference type="GO" id="GO:0003918">
    <property type="term" value="F:DNA topoisomerase type II (double strand cut, ATP-hydrolyzing) activity"/>
    <property type="evidence" value="ECO:0007669"/>
    <property type="project" value="UniProtKB-UniRule"/>
</dbReference>
<dbReference type="GO" id="GO:0046872">
    <property type="term" value="F:metal ion binding"/>
    <property type="evidence" value="ECO:0007669"/>
    <property type="project" value="UniProtKB-KW"/>
</dbReference>
<dbReference type="GO" id="GO:0006265">
    <property type="term" value="P:DNA topological change"/>
    <property type="evidence" value="ECO:0007669"/>
    <property type="project" value="UniProtKB-UniRule"/>
</dbReference>
<dbReference type="GO" id="GO:0006261">
    <property type="term" value="P:DNA-templated DNA replication"/>
    <property type="evidence" value="ECO:0007669"/>
    <property type="project" value="UniProtKB-UniRule"/>
</dbReference>
<dbReference type="GO" id="GO:0046677">
    <property type="term" value="P:response to antibiotic"/>
    <property type="evidence" value="ECO:0007669"/>
    <property type="project" value="UniProtKB-KW"/>
</dbReference>
<dbReference type="CDD" id="cd16928">
    <property type="entry name" value="HATPase_GyrB-like"/>
    <property type="match status" value="1"/>
</dbReference>
<dbReference type="CDD" id="cd00822">
    <property type="entry name" value="TopoII_Trans_DNA_gyrase"/>
    <property type="match status" value="1"/>
</dbReference>
<dbReference type="CDD" id="cd03366">
    <property type="entry name" value="TOPRIM_TopoIIA_GyrB"/>
    <property type="match status" value="1"/>
</dbReference>
<dbReference type="FunFam" id="3.10.20.690:FF:000001">
    <property type="entry name" value="DNA gyrase subunit B"/>
    <property type="match status" value="1"/>
</dbReference>
<dbReference type="FunFam" id="3.30.230.10:FF:000005">
    <property type="entry name" value="DNA gyrase subunit B"/>
    <property type="match status" value="1"/>
</dbReference>
<dbReference type="FunFam" id="3.30.565.10:FF:000002">
    <property type="entry name" value="DNA gyrase subunit B"/>
    <property type="match status" value="1"/>
</dbReference>
<dbReference type="FunFam" id="3.40.50.670:FF:000004">
    <property type="entry name" value="DNA gyrase subunit B"/>
    <property type="match status" value="1"/>
</dbReference>
<dbReference type="FunFam" id="3.40.50.670:FF:000005">
    <property type="entry name" value="DNA gyrase subunit B"/>
    <property type="match status" value="1"/>
</dbReference>
<dbReference type="Gene3D" id="3.10.20.690">
    <property type="match status" value="1"/>
</dbReference>
<dbReference type="Gene3D" id="3.30.230.10">
    <property type="match status" value="1"/>
</dbReference>
<dbReference type="Gene3D" id="3.40.50.670">
    <property type="match status" value="2"/>
</dbReference>
<dbReference type="Gene3D" id="3.30.565.10">
    <property type="entry name" value="Histidine kinase-like ATPase, C-terminal domain"/>
    <property type="match status" value="1"/>
</dbReference>
<dbReference type="HAMAP" id="MF_01898">
    <property type="entry name" value="GyrB"/>
    <property type="match status" value="1"/>
</dbReference>
<dbReference type="InterPro" id="IPR002288">
    <property type="entry name" value="DNA_gyrase_B_C"/>
</dbReference>
<dbReference type="InterPro" id="IPR011557">
    <property type="entry name" value="GyrB"/>
</dbReference>
<dbReference type="InterPro" id="IPR049353">
    <property type="entry name" value="GyrB_hook"/>
</dbReference>
<dbReference type="InterPro" id="IPR041423">
    <property type="entry name" value="GyrB_insert"/>
</dbReference>
<dbReference type="InterPro" id="IPR036890">
    <property type="entry name" value="HATPase_C_sf"/>
</dbReference>
<dbReference type="InterPro" id="IPR020568">
    <property type="entry name" value="Ribosomal_Su5_D2-typ_SF"/>
</dbReference>
<dbReference type="InterPro" id="IPR014721">
    <property type="entry name" value="Ribsml_uS5_D2-typ_fold_subgr"/>
</dbReference>
<dbReference type="InterPro" id="IPR001241">
    <property type="entry name" value="Topo_IIA"/>
</dbReference>
<dbReference type="InterPro" id="IPR013760">
    <property type="entry name" value="Topo_IIA-like_dom_sf"/>
</dbReference>
<dbReference type="InterPro" id="IPR000565">
    <property type="entry name" value="Topo_IIA_B"/>
</dbReference>
<dbReference type="InterPro" id="IPR013759">
    <property type="entry name" value="Topo_IIA_B_C"/>
</dbReference>
<dbReference type="InterPro" id="IPR013506">
    <property type="entry name" value="Topo_IIA_bsu_dom2"/>
</dbReference>
<dbReference type="InterPro" id="IPR018522">
    <property type="entry name" value="TopoIIA_CS"/>
</dbReference>
<dbReference type="InterPro" id="IPR006171">
    <property type="entry name" value="TOPRIM_dom"/>
</dbReference>
<dbReference type="InterPro" id="IPR034160">
    <property type="entry name" value="TOPRIM_GyrB"/>
</dbReference>
<dbReference type="NCBIfam" id="TIGR01059">
    <property type="entry name" value="gyrB"/>
    <property type="match status" value="1"/>
</dbReference>
<dbReference type="NCBIfam" id="NF004189">
    <property type="entry name" value="PRK05644.1"/>
    <property type="match status" value="1"/>
</dbReference>
<dbReference type="NCBIfam" id="NF011501">
    <property type="entry name" value="PRK14939.1"/>
    <property type="match status" value="1"/>
</dbReference>
<dbReference type="PANTHER" id="PTHR45866:SF1">
    <property type="entry name" value="DNA GYRASE SUBUNIT B, MITOCHONDRIAL"/>
    <property type="match status" value="1"/>
</dbReference>
<dbReference type="PANTHER" id="PTHR45866">
    <property type="entry name" value="DNA GYRASE/TOPOISOMERASE SUBUNIT B"/>
    <property type="match status" value="1"/>
</dbReference>
<dbReference type="Pfam" id="PF00204">
    <property type="entry name" value="DNA_gyraseB"/>
    <property type="match status" value="1"/>
</dbReference>
<dbReference type="Pfam" id="PF00986">
    <property type="entry name" value="DNA_gyraseB_C"/>
    <property type="match status" value="1"/>
</dbReference>
<dbReference type="Pfam" id="PF21249">
    <property type="entry name" value="GyrB_hook"/>
    <property type="match status" value="1"/>
</dbReference>
<dbReference type="Pfam" id="PF18053">
    <property type="entry name" value="GyrB_insert"/>
    <property type="match status" value="1"/>
</dbReference>
<dbReference type="Pfam" id="PF02518">
    <property type="entry name" value="HATPase_c"/>
    <property type="match status" value="1"/>
</dbReference>
<dbReference type="Pfam" id="PF01751">
    <property type="entry name" value="Toprim"/>
    <property type="match status" value="1"/>
</dbReference>
<dbReference type="PRINTS" id="PR01159">
    <property type="entry name" value="DNAGYRASEB"/>
</dbReference>
<dbReference type="PRINTS" id="PR00418">
    <property type="entry name" value="TPI2FAMILY"/>
</dbReference>
<dbReference type="SMART" id="SM00387">
    <property type="entry name" value="HATPase_c"/>
    <property type="match status" value="1"/>
</dbReference>
<dbReference type="SMART" id="SM00433">
    <property type="entry name" value="TOP2c"/>
    <property type="match status" value="1"/>
</dbReference>
<dbReference type="SUPFAM" id="SSF55874">
    <property type="entry name" value="ATPase domain of HSP90 chaperone/DNA topoisomerase II/histidine kinase"/>
    <property type="match status" value="1"/>
</dbReference>
<dbReference type="SUPFAM" id="SSF54211">
    <property type="entry name" value="Ribosomal protein S5 domain 2-like"/>
    <property type="match status" value="1"/>
</dbReference>
<dbReference type="SUPFAM" id="SSF56719">
    <property type="entry name" value="Type II DNA topoisomerase"/>
    <property type="match status" value="1"/>
</dbReference>
<dbReference type="PROSITE" id="PS00177">
    <property type="entry name" value="TOPOISOMERASE_II"/>
    <property type="match status" value="1"/>
</dbReference>
<dbReference type="PROSITE" id="PS50880">
    <property type="entry name" value="TOPRIM"/>
    <property type="match status" value="1"/>
</dbReference>